<dbReference type="EMBL" id="CP000847">
    <property type="protein sequence ID" value="ABV74557.1"/>
    <property type="molecule type" value="Genomic_DNA"/>
</dbReference>
<dbReference type="RefSeq" id="WP_012013427.1">
    <property type="nucleotide sequence ID" value="NC_009881.1"/>
</dbReference>
<dbReference type="SMR" id="A8GMD2"/>
<dbReference type="STRING" id="293614.A1C_01135"/>
<dbReference type="KEGG" id="rak:A1C_01135"/>
<dbReference type="eggNOG" id="COG0781">
    <property type="taxonomic scope" value="Bacteria"/>
</dbReference>
<dbReference type="HOGENOM" id="CLU_087843_4_0_5"/>
<dbReference type="Proteomes" id="UP000006830">
    <property type="component" value="Chromosome"/>
</dbReference>
<dbReference type="GO" id="GO:0005829">
    <property type="term" value="C:cytosol"/>
    <property type="evidence" value="ECO:0007669"/>
    <property type="project" value="TreeGrafter"/>
</dbReference>
<dbReference type="GO" id="GO:0003723">
    <property type="term" value="F:RNA binding"/>
    <property type="evidence" value="ECO:0007669"/>
    <property type="project" value="UniProtKB-UniRule"/>
</dbReference>
<dbReference type="GO" id="GO:0006353">
    <property type="term" value="P:DNA-templated transcription termination"/>
    <property type="evidence" value="ECO:0007669"/>
    <property type="project" value="UniProtKB-UniRule"/>
</dbReference>
<dbReference type="GO" id="GO:0031564">
    <property type="term" value="P:transcription antitermination"/>
    <property type="evidence" value="ECO:0007669"/>
    <property type="project" value="UniProtKB-KW"/>
</dbReference>
<dbReference type="Gene3D" id="1.10.940.10">
    <property type="entry name" value="NusB-like"/>
    <property type="match status" value="1"/>
</dbReference>
<dbReference type="HAMAP" id="MF_00073">
    <property type="entry name" value="NusB"/>
    <property type="match status" value="1"/>
</dbReference>
<dbReference type="InterPro" id="IPR035926">
    <property type="entry name" value="NusB-like_sf"/>
</dbReference>
<dbReference type="InterPro" id="IPR011605">
    <property type="entry name" value="NusB_fam"/>
</dbReference>
<dbReference type="InterPro" id="IPR006027">
    <property type="entry name" value="NusB_RsmB_TIM44"/>
</dbReference>
<dbReference type="NCBIfam" id="TIGR01951">
    <property type="entry name" value="nusB"/>
    <property type="match status" value="1"/>
</dbReference>
<dbReference type="PANTHER" id="PTHR11078:SF3">
    <property type="entry name" value="ANTITERMINATION NUSB DOMAIN-CONTAINING PROTEIN"/>
    <property type="match status" value="1"/>
</dbReference>
<dbReference type="PANTHER" id="PTHR11078">
    <property type="entry name" value="N UTILIZATION SUBSTANCE PROTEIN B-RELATED"/>
    <property type="match status" value="1"/>
</dbReference>
<dbReference type="Pfam" id="PF01029">
    <property type="entry name" value="NusB"/>
    <property type="match status" value="1"/>
</dbReference>
<dbReference type="SUPFAM" id="SSF48013">
    <property type="entry name" value="NusB-like"/>
    <property type="match status" value="1"/>
</dbReference>
<keyword id="KW-0694">RNA-binding</keyword>
<keyword id="KW-0804">Transcription</keyword>
<keyword id="KW-0889">Transcription antitermination</keyword>
<keyword id="KW-0805">Transcription regulation</keyword>
<name>NUSB_RICAH</name>
<evidence type="ECO:0000255" key="1">
    <source>
        <dbReference type="HAMAP-Rule" id="MF_00073"/>
    </source>
</evidence>
<protein>
    <recommendedName>
        <fullName evidence="1">Transcription antitermination protein NusB</fullName>
    </recommendedName>
    <alternativeName>
        <fullName evidence="1">Antitermination factor NusB</fullName>
    </alternativeName>
</protein>
<sequence length="156" mass="17632">MSSNKINKKSIARIAAVQAIYQNILQNNDDMDDIMQNVLSFYRNDSSITNLTGNLKISLSISHFKILVKSVFENINKLDEIIDNHLTNDKDPAHMPILLRALLRAGIYELLFYPTTPAKVVINEYTDIANDMLNGYEIGFVNSVLDTIAKEKNKIS</sequence>
<organism>
    <name type="scientific">Rickettsia akari (strain Hartford)</name>
    <dbReference type="NCBI Taxonomy" id="293614"/>
    <lineage>
        <taxon>Bacteria</taxon>
        <taxon>Pseudomonadati</taxon>
        <taxon>Pseudomonadota</taxon>
        <taxon>Alphaproteobacteria</taxon>
        <taxon>Rickettsiales</taxon>
        <taxon>Rickettsiaceae</taxon>
        <taxon>Rickettsieae</taxon>
        <taxon>Rickettsia</taxon>
        <taxon>spotted fever group</taxon>
    </lineage>
</organism>
<comment type="function">
    <text evidence="1">Involved in transcription antitermination. Required for transcription of ribosomal RNA (rRNA) genes. Binds specifically to the boxA antiterminator sequence of the ribosomal RNA (rrn) operons.</text>
</comment>
<comment type="similarity">
    <text evidence="1">Belongs to the NusB family.</text>
</comment>
<reference key="1">
    <citation type="submission" date="2007-09" db="EMBL/GenBank/DDBJ databases">
        <title>Complete genome sequence of Rickettsia akari.</title>
        <authorList>
            <person name="Madan A."/>
            <person name="Fahey J."/>
            <person name="Helton E."/>
            <person name="Ketteman M."/>
            <person name="Madan A."/>
            <person name="Rodrigues S."/>
            <person name="Sanchez A."/>
            <person name="Whiting M."/>
            <person name="Dasch G."/>
            <person name="Eremeeva M."/>
        </authorList>
    </citation>
    <scope>NUCLEOTIDE SEQUENCE [LARGE SCALE GENOMIC DNA]</scope>
    <source>
        <strain>Hartford</strain>
    </source>
</reference>
<proteinExistence type="inferred from homology"/>
<accession>A8GMD2</accession>
<gene>
    <name evidence="1" type="primary">nusB</name>
    <name type="ordered locus">A1C_01135</name>
</gene>
<feature type="chain" id="PRO_1000023765" description="Transcription antitermination protein NusB">
    <location>
        <begin position="1"/>
        <end position="156"/>
    </location>
</feature>